<protein>
    <recommendedName>
        <fullName>T-complex protein 1 subunit beta</fullName>
        <shortName>TCP-1-beta</shortName>
    </recommendedName>
    <alternativeName>
        <fullName>CCT-beta</fullName>
    </alternativeName>
</protein>
<evidence type="ECO:0000250" key="1"/>
<evidence type="ECO:0000305" key="2"/>
<proteinExistence type="evidence at protein level"/>
<dbReference type="EMBL" id="AAFI02000177">
    <property type="protein sequence ID" value="EAL61663.1"/>
    <property type="molecule type" value="Genomic_DNA"/>
</dbReference>
<dbReference type="RefSeq" id="XP_635161.1">
    <property type="nucleotide sequence ID" value="XM_630069.1"/>
</dbReference>
<dbReference type="SMR" id="Q54ES9"/>
<dbReference type="FunCoup" id="Q54ES9">
    <property type="interactions" value="1268"/>
</dbReference>
<dbReference type="STRING" id="44689.Q54ES9"/>
<dbReference type="GlyGen" id="Q54ES9">
    <property type="glycosylation" value="2 sites"/>
</dbReference>
<dbReference type="PaxDb" id="44689-DDB0233992"/>
<dbReference type="EnsemblProtists" id="EAL61663">
    <property type="protein sequence ID" value="EAL61663"/>
    <property type="gene ID" value="DDB_G0291358"/>
</dbReference>
<dbReference type="GeneID" id="8628107"/>
<dbReference type="KEGG" id="ddi:DDB_G0291358"/>
<dbReference type="dictyBase" id="DDB_G0291358">
    <property type="gene designation" value="cct2"/>
</dbReference>
<dbReference type="VEuPathDB" id="AmoebaDB:DDB_G0291358"/>
<dbReference type="eggNOG" id="KOG0363">
    <property type="taxonomic scope" value="Eukaryota"/>
</dbReference>
<dbReference type="HOGENOM" id="CLU_008891_6_2_1"/>
<dbReference type="InParanoid" id="Q54ES9"/>
<dbReference type="OMA" id="CAEMVMS"/>
<dbReference type="PhylomeDB" id="Q54ES9"/>
<dbReference type="BRENDA" id="3.6.4.B10">
    <property type="organism ID" value="1939"/>
</dbReference>
<dbReference type="Reactome" id="R-DDI-390471">
    <property type="pathway name" value="Association of TriC/CCT with target proteins during biosynthesis"/>
</dbReference>
<dbReference type="Reactome" id="R-DDI-6798695">
    <property type="pathway name" value="Neutrophil degranulation"/>
</dbReference>
<dbReference type="Reactome" id="R-DDI-6814122">
    <property type="pathway name" value="Cooperation of PDCL (PhLP1) and TRiC/CCT in G-protein beta folding"/>
</dbReference>
<dbReference type="Reactome" id="R-DDI-9013418">
    <property type="pathway name" value="RHOBTB2 GTPase cycle"/>
</dbReference>
<dbReference type="Reactome" id="R-DDI-9013422">
    <property type="pathway name" value="RHOBTB1 GTPase cycle"/>
</dbReference>
<dbReference type="PRO" id="PR:Q54ES9"/>
<dbReference type="Proteomes" id="UP000002195">
    <property type="component" value="Chromosome 6"/>
</dbReference>
<dbReference type="GO" id="GO:0005832">
    <property type="term" value="C:chaperonin-containing T-complex"/>
    <property type="evidence" value="ECO:0000250"/>
    <property type="project" value="dictyBase"/>
</dbReference>
<dbReference type="GO" id="GO:0045335">
    <property type="term" value="C:phagocytic vesicle"/>
    <property type="evidence" value="ECO:0007005"/>
    <property type="project" value="dictyBase"/>
</dbReference>
<dbReference type="GO" id="GO:0005524">
    <property type="term" value="F:ATP binding"/>
    <property type="evidence" value="ECO:0007669"/>
    <property type="project" value="UniProtKB-KW"/>
</dbReference>
<dbReference type="GO" id="GO:0016887">
    <property type="term" value="F:ATP hydrolysis activity"/>
    <property type="evidence" value="ECO:0007669"/>
    <property type="project" value="InterPro"/>
</dbReference>
<dbReference type="GO" id="GO:0140662">
    <property type="term" value="F:ATP-dependent protein folding chaperone"/>
    <property type="evidence" value="ECO:0007669"/>
    <property type="project" value="InterPro"/>
</dbReference>
<dbReference type="GO" id="GO:0051082">
    <property type="term" value="F:unfolded protein binding"/>
    <property type="evidence" value="ECO:0000250"/>
    <property type="project" value="dictyBase"/>
</dbReference>
<dbReference type="GO" id="GO:0006457">
    <property type="term" value="P:protein folding"/>
    <property type="evidence" value="ECO:0000250"/>
    <property type="project" value="dictyBase"/>
</dbReference>
<dbReference type="CDD" id="cd03336">
    <property type="entry name" value="TCP1_beta"/>
    <property type="match status" value="1"/>
</dbReference>
<dbReference type="FunFam" id="3.30.260.10:FF:000025">
    <property type="entry name" value="Chaperonin containing TCP1 subunit 2"/>
    <property type="match status" value="1"/>
</dbReference>
<dbReference type="FunFam" id="3.50.7.10:FF:000002">
    <property type="entry name" value="T-complex protein 1 subunit beta"/>
    <property type="match status" value="1"/>
</dbReference>
<dbReference type="FunFam" id="1.10.560.10:FF:000017">
    <property type="entry name" value="T-complex protein 1 subunit eta"/>
    <property type="match status" value="1"/>
</dbReference>
<dbReference type="Gene3D" id="3.50.7.10">
    <property type="entry name" value="GroEL"/>
    <property type="match status" value="1"/>
</dbReference>
<dbReference type="Gene3D" id="1.10.560.10">
    <property type="entry name" value="GroEL-like equatorial domain"/>
    <property type="match status" value="1"/>
</dbReference>
<dbReference type="Gene3D" id="3.30.260.10">
    <property type="entry name" value="TCP-1-like chaperonin intermediate domain"/>
    <property type="match status" value="1"/>
</dbReference>
<dbReference type="InterPro" id="IPR012716">
    <property type="entry name" value="Chap_CCT_beta"/>
</dbReference>
<dbReference type="InterPro" id="IPR017998">
    <property type="entry name" value="Chaperone_TCP-1"/>
</dbReference>
<dbReference type="InterPro" id="IPR002194">
    <property type="entry name" value="Chaperonin_TCP-1_CS"/>
</dbReference>
<dbReference type="InterPro" id="IPR002423">
    <property type="entry name" value="Cpn60/GroEL/TCP-1"/>
</dbReference>
<dbReference type="InterPro" id="IPR027409">
    <property type="entry name" value="GroEL-like_apical_dom_sf"/>
</dbReference>
<dbReference type="InterPro" id="IPR027413">
    <property type="entry name" value="GROEL-like_equatorial_sf"/>
</dbReference>
<dbReference type="InterPro" id="IPR027410">
    <property type="entry name" value="TCP-1-like_intermed_sf"/>
</dbReference>
<dbReference type="InterPro" id="IPR053374">
    <property type="entry name" value="TCP-1_chaperonin"/>
</dbReference>
<dbReference type="NCBIfam" id="TIGR02341">
    <property type="entry name" value="chap_CCT_beta"/>
    <property type="match status" value="1"/>
</dbReference>
<dbReference type="NCBIfam" id="NF041083">
    <property type="entry name" value="thermosome_beta"/>
    <property type="match status" value="1"/>
</dbReference>
<dbReference type="PANTHER" id="PTHR11353">
    <property type="entry name" value="CHAPERONIN"/>
    <property type="match status" value="1"/>
</dbReference>
<dbReference type="Pfam" id="PF00118">
    <property type="entry name" value="Cpn60_TCP1"/>
    <property type="match status" value="1"/>
</dbReference>
<dbReference type="PRINTS" id="PR00304">
    <property type="entry name" value="TCOMPLEXTCP1"/>
</dbReference>
<dbReference type="SUPFAM" id="SSF52029">
    <property type="entry name" value="GroEL apical domain-like"/>
    <property type="match status" value="1"/>
</dbReference>
<dbReference type="SUPFAM" id="SSF48592">
    <property type="entry name" value="GroEL equatorial domain-like"/>
    <property type="match status" value="1"/>
</dbReference>
<dbReference type="SUPFAM" id="SSF54849">
    <property type="entry name" value="GroEL-intermediate domain like"/>
    <property type="match status" value="1"/>
</dbReference>
<dbReference type="PROSITE" id="PS00750">
    <property type="entry name" value="TCP1_1"/>
    <property type="match status" value="1"/>
</dbReference>
<dbReference type="PROSITE" id="PS00751">
    <property type="entry name" value="TCP1_2"/>
    <property type="match status" value="1"/>
</dbReference>
<dbReference type="PROSITE" id="PS00995">
    <property type="entry name" value="TCP1_3"/>
    <property type="match status" value="1"/>
</dbReference>
<organism>
    <name type="scientific">Dictyostelium discoideum</name>
    <name type="common">Social amoeba</name>
    <dbReference type="NCBI Taxonomy" id="44689"/>
    <lineage>
        <taxon>Eukaryota</taxon>
        <taxon>Amoebozoa</taxon>
        <taxon>Evosea</taxon>
        <taxon>Eumycetozoa</taxon>
        <taxon>Dictyostelia</taxon>
        <taxon>Dictyosteliales</taxon>
        <taxon>Dictyosteliaceae</taxon>
        <taxon>Dictyostelium</taxon>
    </lineage>
</organism>
<sequence length="532" mass="57955">MSSQLAPIPILNQNASEERGEIARLSSFVGAIAITDLVKTTLGPKGMDKILISASNPNELIITNDGATILTKIYIDNPAAKILVDISRTQDDEVGDGTTSVCVLAGELLREGERLVQQKVHPQTIISGWRLALETARAALQSSTQDHSSDKVKFREDLLNIARTTLSSKILHTEKDHFANMVVDAVLRLNGNTNLDNIHIIKKSGGSLRESYLDEGFILEKKIGVGCPKRLENPKILIANTAMDTDKIKIFGGKVVVDSMTELAKMEDAEKEKMLNKCKKIVDHGINCFVNRQLVYNLPEQYFAEHGVMSIEHADFDGIERLALVTGAEIVSTFDHPELVKIGTCKLIEEVMIGEDKVIRFSGIPSGEACTIVLRGATSHILEEAERSIHDALCVLAVTVAETRTVLGAGCSEMIMSKAVDELAAITPGKKAMAIESFAKALRQIPTIIANNAGYDSSELVSQLKAAHHQGDKKAGLNMRDGCIGNAEELGVIESFKVKQQVLVSAHEAAEMIMRVDDILRAAPRQRSNLQH</sequence>
<feature type="chain" id="PRO_0000327381" description="T-complex protein 1 subunit beta">
    <location>
        <begin position="1"/>
        <end position="532"/>
    </location>
</feature>
<name>TCPB_DICDI</name>
<accession>Q54ES9</accession>
<reference key="1">
    <citation type="journal article" date="2005" name="Nature">
        <title>The genome of the social amoeba Dictyostelium discoideum.</title>
        <authorList>
            <person name="Eichinger L."/>
            <person name="Pachebat J.A."/>
            <person name="Gloeckner G."/>
            <person name="Rajandream M.A."/>
            <person name="Sucgang R."/>
            <person name="Berriman M."/>
            <person name="Song J."/>
            <person name="Olsen R."/>
            <person name="Szafranski K."/>
            <person name="Xu Q."/>
            <person name="Tunggal B."/>
            <person name="Kummerfeld S."/>
            <person name="Madera M."/>
            <person name="Konfortov B.A."/>
            <person name="Rivero F."/>
            <person name="Bankier A.T."/>
            <person name="Lehmann R."/>
            <person name="Hamlin N."/>
            <person name="Davies R."/>
            <person name="Gaudet P."/>
            <person name="Fey P."/>
            <person name="Pilcher K."/>
            <person name="Chen G."/>
            <person name="Saunders D."/>
            <person name="Sodergren E.J."/>
            <person name="Davis P."/>
            <person name="Kerhornou A."/>
            <person name="Nie X."/>
            <person name="Hall N."/>
            <person name="Anjard C."/>
            <person name="Hemphill L."/>
            <person name="Bason N."/>
            <person name="Farbrother P."/>
            <person name="Desany B."/>
            <person name="Just E."/>
            <person name="Morio T."/>
            <person name="Rost R."/>
            <person name="Churcher C.M."/>
            <person name="Cooper J."/>
            <person name="Haydock S."/>
            <person name="van Driessche N."/>
            <person name="Cronin A."/>
            <person name="Goodhead I."/>
            <person name="Muzny D.M."/>
            <person name="Mourier T."/>
            <person name="Pain A."/>
            <person name="Lu M."/>
            <person name="Harper D."/>
            <person name="Lindsay R."/>
            <person name="Hauser H."/>
            <person name="James K.D."/>
            <person name="Quiles M."/>
            <person name="Madan Babu M."/>
            <person name="Saito T."/>
            <person name="Buchrieser C."/>
            <person name="Wardroper A."/>
            <person name="Felder M."/>
            <person name="Thangavelu M."/>
            <person name="Johnson D."/>
            <person name="Knights A."/>
            <person name="Loulseged H."/>
            <person name="Mungall K.L."/>
            <person name="Oliver K."/>
            <person name="Price C."/>
            <person name="Quail M.A."/>
            <person name="Urushihara H."/>
            <person name="Hernandez J."/>
            <person name="Rabbinowitsch E."/>
            <person name="Steffen D."/>
            <person name="Sanders M."/>
            <person name="Ma J."/>
            <person name="Kohara Y."/>
            <person name="Sharp S."/>
            <person name="Simmonds M.N."/>
            <person name="Spiegler S."/>
            <person name="Tivey A."/>
            <person name="Sugano S."/>
            <person name="White B."/>
            <person name="Walker D."/>
            <person name="Woodward J.R."/>
            <person name="Winckler T."/>
            <person name="Tanaka Y."/>
            <person name="Shaulsky G."/>
            <person name="Schleicher M."/>
            <person name="Weinstock G.M."/>
            <person name="Rosenthal A."/>
            <person name="Cox E.C."/>
            <person name="Chisholm R.L."/>
            <person name="Gibbs R.A."/>
            <person name="Loomis W.F."/>
            <person name="Platzer M."/>
            <person name="Kay R.R."/>
            <person name="Williams J.G."/>
            <person name="Dear P.H."/>
            <person name="Noegel A.A."/>
            <person name="Barrell B.G."/>
            <person name="Kuspa A."/>
        </authorList>
    </citation>
    <scope>NUCLEOTIDE SEQUENCE [LARGE SCALE GENOMIC DNA]</scope>
    <source>
        <strain>AX4</strain>
    </source>
</reference>
<reference key="2">
    <citation type="journal article" date="2006" name="Mol. Cell. Proteomics">
        <title>Proteomics fingerprinting of phagosome maturation and evidence for the role of a Galpha during uptake.</title>
        <authorList>
            <person name="Gotthardt D."/>
            <person name="Blancheteau V."/>
            <person name="Bosserhoff A."/>
            <person name="Ruppert T."/>
            <person name="Delorenzi M."/>
            <person name="Soldati T."/>
        </authorList>
    </citation>
    <scope>IDENTIFICATION BY MASS SPECTROMETRY [LARGE SCALE ANALYSIS]</scope>
    <source>
        <strain>AX2</strain>
    </source>
</reference>
<comment type="function">
    <text evidence="1">Molecular chaperone; assists the folding of proteins upon ATP hydrolysis. Known to play a role, in vitro, in the folding of actin and tubulin (By similarity).</text>
</comment>
<comment type="subunit">
    <text evidence="1">Heterooligomeric complex of about 850 to 900 kDa that forms two stacked rings, 12 to 16 nm in diameter.</text>
</comment>
<comment type="subcellular location">
    <subcellularLocation>
        <location evidence="1">Cytoplasm</location>
    </subcellularLocation>
</comment>
<comment type="similarity">
    <text evidence="2">Belongs to the TCP-1 chaperonin family.</text>
</comment>
<gene>
    <name type="primary">cct2</name>
    <name type="ORF">DDB_G0291358</name>
</gene>
<keyword id="KW-0067">ATP-binding</keyword>
<keyword id="KW-0143">Chaperone</keyword>
<keyword id="KW-0963">Cytoplasm</keyword>
<keyword id="KW-0547">Nucleotide-binding</keyword>
<keyword id="KW-1185">Reference proteome</keyword>